<proteinExistence type="inferred from homology"/>
<dbReference type="EC" id="6.3.1.13" evidence="1"/>
<dbReference type="EMBL" id="CP001874">
    <property type="protein sequence ID" value="ADG88644.1"/>
    <property type="molecule type" value="Genomic_DNA"/>
</dbReference>
<dbReference type="RefSeq" id="WP_013132177.1">
    <property type="nucleotide sequence ID" value="NC_014165.1"/>
</dbReference>
<dbReference type="SMR" id="D6Y1N8"/>
<dbReference type="STRING" id="469371.Tbis_1932"/>
<dbReference type="KEGG" id="tbi:Tbis_1932"/>
<dbReference type="eggNOG" id="COG0215">
    <property type="taxonomic scope" value="Bacteria"/>
</dbReference>
<dbReference type="HOGENOM" id="CLU_013528_0_0_11"/>
<dbReference type="OrthoDB" id="9815130at2"/>
<dbReference type="Proteomes" id="UP000006640">
    <property type="component" value="Chromosome"/>
</dbReference>
<dbReference type="GO" id="GO:0005829">
    <property type="term" value="C:cytosol"/>
    <property type="evidence" value="ECO:0007669"/>
    <property type="project" value="TreeGrafter"/>
</dbReference>
<dbReference type="GO" id="GO:0005524">
    <property type="term" value="F:ATP binding"/>
    <property type="evidence" value="ECO:0007669"/>
    <property type="project" value="UniProtKB-KW"/>
</dbReference>
<dbReference type="GO" id="GO:0035446">
    <property type="term" value="F:cysteine-glucosaminylinositol ligase activity"/>
    <property type="evidence" value="ECO:0007669"/>
    <property type="project" value="UniProtKB-UniRule"/>
</dbReference>
<dbReference type="GO" id="GO:0004817">
    <property type="term" value="F:cysteine-tRNA ligase activity"/>
    <property type="evidence" value="ECO:0007669"/>
    <property type="project" value="TreeGrafter"/>
</dbReference>
<dbReference type="GO" id="GO:0008270">
    <property type="term" value="F:zinc ion binding"/>
    <property type="evidence" value="ECO:0007669"/>
    <property type="project" value="UniProtKB-UniRule"/>
</dbReference>
<dbReference type="GO" id="GO:0006423">
    <property type="term" value="P:cysteinyl-tRNA aminoacylation"/>
    <property type="evidence" value="ECO:0007669"/>
    <property type="project" value="TreeGrafter"/>
</dbReference>
<dbReference type="GO" id="GO:0010125">
    <property type="term" value="P:mycothiol biosynthetic process"/>
    <property type="evidence" value="ECO:0007669"/>
    <property type="project" value="UniProtKB-UniRule"/>
</dbReference>
<dbReference type="CDD" id="cd00672">
    <property type="entry name" value="CysRS_core"/>
    <property type="match status" value="1"/>
</dbReference>
<dbReference type="FunFam" id="3.40.50.620:FF:000134">
    <property type="entry name" value="L-cysteine:1D-myo-inositol 2-amino-2-deoxy-alpha-D-glucopyranoside ligase"/>
    <property type="match status" value="1"/>
</dbReference>
<dbReference type="Gene3D" id="1.20.120.640">
    <property type="entry name" value="Anticodon-binding domain of a subclass of class I aminoacyl-tRNA synthetases"/>
    <property type="match status" value="1"/>
</dbReference>
<dbReference type="Gene3D" id="3.40.50.620">
    <property type="entry name" value="HUPs"/>
    <property type="match status" value="1"/>
</dbReference>
<dbReference type="HAMAP" id="MF_01697">
    <property type="entry name" value="MshC"/>
    <property type="match status" value="1"/>
</dbReference>
<dbReference type="InterPro" id="IPR024909">
    <property type="entry name" value="Cys-tRNA/MSH_ligase"/>
</dbReference>
<dbReference type="InterPro" id="IPR017812">
    <property type="entry name" value="Mycothiol_ligase_MshC"/>
</dbReference>
<dbReference type="InterPro" id="IPR014729">
    <property type="entry name" value="Rossmann-like_a/b/a_fold"/>
</dbReference>
<dbReference type="InterPro" id="IPR032678">
    <property type="entry name" value="tRNA-synt_1_cat_dom"/>
</dbReference>
<dbReference type="NCBIfam" id="TIGR03447">
    <property type="entry name" value="mycothiol_MshC"/>
    <property type="match status" value="1"/>
</dbReference>
<dbReference type="PANTHER" id="PTHR10890:SF3">
    <property type="entry name" value="CYSTEINE--TRNA LIGASE, CYTOPLASMIC"/>
    <property type="match status" value="1"/>
</dbReference>
<dbReference type="PANTHER" id="PTHR10890">
    <property type="entry name" value="CYSTEINYL-TRNA SYNTHETASE"/>
    <property type="match status" value="1"/>
</dbReference>
<dbReference type="Pfam" id="PF01406">
    <property type="entry name" value="tRNA-synt_1e"/>
    <property type="match status" value="1"/>
</dbReference>
<dbReference type="PRINTS" id="PR00983">
    <property type="entry name" value="TRNASYNTHCYS"/>
</dbReference>
<dbReference type="SUPFAM" id="SSF52374">
    <property type="entry name" value="Nucleotidylyl transferase"/>
    <property type="match status" value="1"/>
</dbReference>
<organism>
    <name type="scientific">Thermobispora bispora (strain ATCC 19993 / DSM 43833 / CBS 139.67 / JCM 10125 / KCTC 9307 / NBRC 14880 / R51)</name>
    <dbReference type="NCBI Taxonomy" id="469371"/>
    <lineage>
        <taxon>Bacteria</taxon>
        <taxon>Bacillati</taxon>
        <taxon>Actinomycetota</taxon>
        <taxon>Actinomycetes</taxon>
        <taxon>Streptosporangiales</taxon>
        <taxon>Streptosporangiaceae</taxon>
        <taxon>Thermobispora</taxon>
    </lineage>
</organism>
<keyword id="KW-0067">ATP-binding</keyword>
<keyword id="KW-0436">Ligase</keyword>
<keyword id="KW-0479">Metal-binding</keyword>
<keyword id="KW-0547">Nucleotide-binding</keyword>
<keyword id="KW-1185">Reference proteome</keyword>
<keyword id="KW-0862">Zinc</keyword>
<protein>
    <recommendedName>
        <fullName evidence="1">L-cysteine:1D-myo-inositol 2-amino-2-deoxy-alpha-D-glucopyranoside ligase</fullName>
        <shortName evidence="1">L-Cys:GlcN-Ins ligase</shortName>
        <ecNumber evidence="1">6.3.1.13</ecNumber>
    </recommendedName>
    <alternativeName>
        <fullName evidence="1">Mycothiol ligase</fullName>
        <shortName evidence="1">MSH ligase</shortName>
    </alternativeName>
</protein>
<evidence type="ECO:0000255" key="1">
    <source>
        <dbReference type="HAMAP-Rule" id="MF_01697"/>
    </source>
</evidence>
<accession>D6Y1N8</accession>
<comment type="function">
    <text evidence="1">Catalyzes the ATP-dependent condensation of GlcN-Ins and L-cysteine to form L-Cys-GlcN-Ins.</text>
</comment>
<comment type="catalytic activity">
    <reaction evidence="1">
        <text>1D-myo-inositol 2-amino-2-deoxy-alpha-D-glucopyranoside + L-cysteine + ATP = 1D-myo-inositol 2-(L-cysteinylamino)-2-deoxy-alpha-D-glucopyranoside + AMP + diphosphate + H(+)</text>
        <dbReference type="Rhea" id="RHEA:26176"/>
        <dbReference type="ChEBI" id="CHEBI:15378"/>
        <dbReference type="ChEBI" id="CHEBI:30616"/>
        <dbReference type="ChEBI" id="CHEBI:33019"/>
        <dbReference type="ChEBI" id="CHEBI:35235"/>
        <dbReference type="ChEBI" id="CHEBI:58886"/>
        <dbReference type="ChEBI" id="CHEBI:58887"/>
        <dbReference type="ChEBI" id="CHEBI:456215"/>
        <dbReference type="EC" id="6.3.1.13"/>
    </reaction>
</comment>
<comment type="cofactor">
    <cofactor evidence="1">
        <name>Zn(2+)</name>
        <dbReference type="ChEBI" id="CHEBI:29105"/>
    </cofactor>
    <text evidence="1">Binds 1 zinc ion per subunit.</text>
</comment>
<comment type="subunit">
    <text evidence="1">Monomer.</text>
</comment>
<comment type="similarity">
    <text evidence="1">Belongs to the class-I aminoacyl-tRNA synthetase family. MshC subfamily.</text>
</comment>
<sequence>MRSWSAPKVPKLPGSGLPLRLYDTATREVRETEPSGKARMYVCGITPYDATHLGHANTYLAFDLVNRAWRDAGHDVHYTQNTTDVDDPLLERAQAIGVDWRELADREIELFRTDMEALRILPPRDYVAVTEVIDDIAEVIVRLMERGATYRIGDDVYFSVAAAPKFGAISGYDEETMRRLFAERGGDPGRAGKRNPLDWLLWRGERPGEPSWESPFGRGRPGWHVECTAIALRHLGPGFDVSGGGSDLIFPHHEMGACEGHVATGEWPFARAYVHAGMVAYEGEKMSKSRGNLVFVSELRHEADPMAIRLALLARHYRSDWEWTPDRLTEAEARLARWRAAVARPAGPDGAALLARVRERIADDLDAPGALALIDAWAAADGDDASAPGLVRDMVDALLGVAL</sequence>
<feature type="chain" id="PRO_0000400491" description="L-cysteine:1D-myo-inositol 2-amino-2-deoxy-alpha-D-glucopyranoside ligase">
    <location>
        <begin position="1"/>
        <end position="403"/>
    </location>
</feature>
<feature type="short sequence motif" description="'HIGH' region" evidence="1">
    <location>
        <begin position="45"/>
        <end position="55"/>
    </location>
</feature>
<feature type="short sequence motif" description="'ERGGDP' region" evidence="1">
    <location>
        <begin position="183"/>
        <end position="188"/>
    </location>
</feature>
<feature type="short sequence motif" description="'KMSKS' region" evidence="1">
    <location>
        <begin position="285"/>
        <end position="289"/>
    </location>
</feature>
<feature type="binding site" evidence="1">
    <location>
        <begin position="43"/>
        <end position="46"/>
    </location>
    <ligand>
        <name>L-cysteinyl-5'-AMP</name>
        <dbReference type="ChEBI" id="CHEBI:144924"/>
    </ligand>
</feature>
<feature type="binding site" evidence="1">
    <location>
        <position position="43"/>
    </location>
    <ligand>
        <name>Zn(2+)</name>
        <dbReference type="ChEBI" id="CHEBI:29105"/>
    </ligand>
</feature>
<feature type="binding site" evidence="1">
    <location>
        <position position="58"/>
    </location>
    <ligand>
        <name>L-cysteinyl-5'-AMP</name>
        <dbReference type="ChEBI" id="CHEBI:144924"/>
    </ligand>
</feature>
<feature type="binding site" evidence="1">
    <location>
        <begin position="81"/>
        <end position="83"/>
    </location>
    <ligand>
        <name>L-cysteinyl-5'-AMP</name>
        <dbReference type="ChEBI" id="CHEBI:144924"/>
    </ligand>
</feature>
<feature type="binding site" evidence="1">
    <location>
        <position position="223"/>
    </location>
    <ligand>
        <name>L-cysteinyl-5'-AMP</name>
        <dbReference type="ChEBI" id="CHEBI:144924"/>
    </ligand>
</feature>
<feature type="binding site" evidence="1">
    <location>
        <position position="227"/>
    </location>
    <ligand>
        <name>Zn(2+)</name>
        <dbReference type="ChEBI" id="CHEBI:29105"/>
    </ligand>
</feature>
<feature type="binding site" evidence="1">
    <location>
        <begin position="245"/>
        <end position="247"/>
    </location>
    <ligand>
        <name>L-cysteinyl-5'-AMP</name>
        <dbReference type="ChEBI" id="CHEBI:144924"/>
    </ligand>
</feature>
<feature type="binding site" evidence="1">
    <location>
        <position position="252"/>
    </location>
    <ligand>
        <name>Zn(2+)</name>
        <dbReference type="ChEBI" id="CHEBI:29105"/>
    </ligand>
</feature>
<feature type="binding site" evidence="1">
    <location>
        <position position="279"/>
    </location>
    <ligand>
        <name>L-cysteinyl-5'-AMP</name>
        <dbReference type="ChEBI" id="CHEBI:144924"/>
    </ligand>
</feature>
<reference key="1">
    <citation type="journal article" date="2010" name="Stand. Genomic Sci.">
        <title>Complete genome sequence of Thermobispora bispora type strain (R51).</title>
        <authorList>
            <person name="Liolios K."/>
            <person name="Sikorski J."/>
            <person name="Jando M."/>
            <person name="Lapidus A."/>
            <person name="Copeland A."/>
            <person name="Glavina del Rio T."/>
            <person name="Nolan M."/>
            <person name="Lucas S."/>
            <person name="Tice H."/>
            <person name="Cheng J.F."/>
            <person name="Han C."/>
            <person name="Woyke T."/>
            <person name="Goodwin L."/>
            <person name="Pitluck S."/>
            <person name="Ivanova N."/>
            <person name="Mavromatis K."/>
            <person name="Mikhailova N."/>
            <person name="Chertkov O."/>
            <person name="Kuske C."/>
            <person name="Chen A."/>
            <person name="Palaniappan K."/>
            <person name="Land M."/>
            <person name="Hauser L."/>
            <person name="Chang Y.J."/>
            <person name="Jeffries C.D."/>
            <person name="Detter J.C."/>
            <person name="Brettin T."/>
            <person name="Rohde M."/>
            <person name="Goeker M."/>
            <person name="Bristow J."/>
            <person name="Eisen J.A."/>
            <person name="Markowitz V."/>
            <person name="Hugenholtz P."/>
            <person name="Klenk H.P."/>
            <person name="Kyrpides N.C."/>
        </authorList>
    </citation>
    <scope>NUCLEOTIDE SEQUENCE [LARGE SCALE GENOMIC DNA]</scope>
    <source>
        <strain>ATCC 19993 / DSM 43833 / CBS 139.67 / JCM 10125 / KCTC 9307 / NBRC 14880 / R51</strain>
    </source>
</reference>
<gene>
    <name evidence="1" type="primary">mshC</name>
    <name type="ordered locus">Tbis_1932</name>
</gene>
<name>MSHC_THEBD</name>